<keyword id="KW-0025">Alternative splicing</keyword>
<keyword id="KW-0343">GTPase activation</keyword>
<keyword id="KW-1267">Proteomics identification</keyword>
<keyword id="KW-1185">Reference proteome</keyword>
<dbReference type="EMBL" id="AK303689">
    <property type="protein sequence ID" value="BAG64679.1"/>
    <property type="molecule type" value="mRNA"/>
</dbReference>
<dbReference type="EMBL" id="AP000889">
    <property type="status" value="NOT_ANNOTATED_CDS"/>
    <property type="molecule type" value="Genomic_DNA"/>
</dbReference>
<dbReference type="EMBL" id="AP002353">
    <property type="status" value="NOT_ANNOTATED_CDS"/>
    <property type="molecule type" value="Genomic_DNA"/>
</dbReference>
<dbReference type="EMBL" id="CH471065">
    <property type="protein sequence ID" value="EAW67091.1"/>
    <property type="molecule type" value="Genomic_DNA"/>
</dbReference>
<dbReference type="EMBL" id="BC028725">
    <property type="protein sequence ID" value="AAH28725.3"/>
    <property type="molecule type" value="mRNA"/>
</dbReference>
<dbReference type="EMBL" id="AL359601">
    <property type="protein sequence ID" value="CAB94879.1"/>
    <property type="molecule type" value="mRNA"/>
</dbReference>
<dbReference type="CCDS" id="CCDS44723.1">
    <molecule id="Q8N336-1"/>
</dbReference>
<dbReference type="CCDS" id="CCDS44724.1">
    <molecule id="Q8N336-3"/>
</dbReference>
<dbReference type="PIR" id="T50627">
    <property type="entry name" value="T50627"/>
</dbReference>
<dbReference type="RefSeq" id="NP_001123509.1">
    <molecule id="Q8N336-3"/>
    <property type="nucleotide sequence ID" value="NM_001130037.2"/>
</dbReference>
<dbReference type="RefSeq" id="NP_001294947.1">
    <property type="nucleotide sequence ID" value="NM_001308018.1"/>
</dbReference>
<dbReference type="RefSeq" id="NP_061182.3">
    <molecule id="Q8N336-1"/>
    <property type="nucleotide sequence ID" value="NM_018712.3"/>
</dbReference>
<dbReference type="SMR" id="Q8N336"/>
<dbReference type="BioGRID" id="120702">
    <property type="interactions" value="14"/>
</dbReference>
<dbReference type="FunCoup" id="Q8N336">
    <property type="interactions" value="343"/>
</dbReference>
<dbReference type="IntAct" id="Q8N336">
    <property type="interactions" value="10"/>
</dbReference>
<dbReference type="STRING" id="9606.ENSP00000265840"/>
<dbReference type="iPTMnet" id="Q8N336"/>
<dbReference type="PhosphoSitePlus" id="Q8N336"/>
<dbReference type="BioMuta" id="ELMOD1"/>
<dbReference type="jPOST" id="Q8N336"/>
<dbReference type="MassIVE" id="Q8N336"/>
<dbReference type="PaxDb" id="9606-ENSP00000265840"/>
<dbReference type="PeptideAtlas" id="Q8N336"/>
<dbReference type="ProteomicsDB" id="34030"/>
<dbReference type="ProteomicsDB" id="71760">
    <molecule id="Q8N336-1"/>
</dbReference>
<dbReference type="Antibodypedia" id="45528">
    <property type="antibodies" value="128 antibodies from 21 providers"/>
</dbReference>
<dbReference type="DNASU" id="55531"/>
<dbReference type="Ensembl" id="ENST00000265840.12">
    <molecule id="Q8N336-1"/>
    <property type="protein sequence ID" value="ENSP00000265840.7"/>
    <property type="gene ID" value="ENSG00000110675.13"/>
</dbReference>
<dbReference type="Ensembl" id="ENST00000443271.2">
    <molecule id="Q8N336-3"/>
    <property type="protein sequence ID" value="ENSP00000412257.2"/>
    <property type="gene ID" value="ENSG00000110675.13"/>
</dbReference>
<dbReference type="GeneID" id="55531"/>
<dbReference type="KEGG" id="hsa:55531"/>
<dbReference type="MANE-Select" id="ENST00000265840.12">
    <property type="protein sequence ID" value="ENSP00000265840.7"/>
    <property type="RefSeq nucleotide sequence ID" value="NM_018712.4"/>
    <property type="RefSeq protein sequence ID" value="NP_061182.3"/>
</dbReference>
<dbReference type="UCSC" id="uc001pjm.4">
    <molecule id="Q8N336-1"/>
    <property type="organism name" value="human"/>
</dbReference>
<dbReference type="AGR" id="HGNC:25334"/>
<dbReference type="CTD" id="55531"/>
<dbReference type="DisGeNET" id="55531"/>
<dbReference type="GeneCards" id="ELMOD1"/>
<dbReference type="HGNC" id="HGNC:25334">
    <property type="gene designation" value="ELMOD1"/>
</dbReference>
<dbReference type="HPA" id="ENSG00000110675">
    <property type="expression patterns" value="Group enriched (brain, pituitary gland, retina, skin)"/>
</dbReference>
<dbReference type="MIM" id="615456">
    <property type="type" value="gene"/>
</dbReference>
<dbReference type="neXtProt" id="NX_Q8N336"/>
<dbReference type="OpenTargets" id="ENSG00000110675"/>
<dbReference type="PharmGKB" id="PA134903991"/>
<dbReference type="VEuPathDB" id="HostDB:ENSG00000110675"/>
<dbReference type="eggNOG" id="KOG2998">
    <property type="taxonomic scope" value="Eukaryota"/>
</dbReference>
<dbReference type="GeneTree" id="ENSGT00940000159782"/>
<dbReference type="HOGENOM" id="CLU_056289_0_0_1"/>
<dbReference type="InParanoid" id="Q8N336"/>
<dbReference type="OMA" id="PHFQQTF"/>
<dbReference type="OrthoDB" id="67155at2759"/>
<dbReference type="PAN-GO" id="Q8N336">
    <property type="GO annotations" value="1 GO annotation based on evolutionary models"/>
</dbReference>
<dbReference type="PhylomeDB" id="Q8N336"/>
<dbReference type="TreeFam" id="TF323472"/>
<dbReference type="PathwayCommons" id="Q8N336"/>
<dbReference type="SignaLink" id="Q8N336"/>
<dbReference type="BioGRID-ORCS" id="55531">
    <property type="hits" value="12 hits in 1150 CRISPR screens"/>
</dbReference>
<dbReference type="ChiTaRS" id="ELMOD1">
    <property type="organism name" value="human"/>
</dbReference>
<dbReference type="GenomeRNAi" id="55531"/>
<dbReference type="Pharos" id="Q8N336">
    <property type="development level" value="Tbio"/>
</dbReference>
<dbReference type="PRO" id="PR:Q8N336"/>
<dbReference type="Proteomes" id="UP000005640">
    <property type="component" value="Chromosome 11"/>
</dbReference>
<dbReference type="RNAct" id="Q8N336">
    <property type="molecule type" value="protein"/>
</dbReference>
<dbReference type="Bgee" id="ENSG00000110675">
    <property type="expression patterns" value="Expressed in lateral nuclear group of thalamus and 128 other cell types or tissues"/>
</dbReference>
<dbReference type="ExpressionAtlas" id="Q8N336">
    <property type="expression patterns" value="baseline and differential"/>
</dbReference>
<dbReference type="GO" id="GO:0005929">
    <property type="term" value="C:cilium"/>
    <property type="evidence" value="ECO:0007669"/>
    <property type="project" value="Ensembl"/>
</dbReference>
<dbReference type="GO" id="GO:0098978">
    <property type="term" value="C:glutamatergic synapse"/>
    <property type="evidence" value="ECO:0007669"/>
    <property type="project" value="Ensembl"/>
</dbReference>
<dbReference type="GO" id="GO:0005794">
    <property type="term" value="C:Golgi apparatus"/>
    <property type="evidence" value="ECO:0007669"/>
    <property type="project" value="Ensembl"/>
</dbReference>
<dbReference type="GO" id="GO:0005096">
    <property type="term" value="F:GTPase activator activity"/>
    <property type="evidence" value="ECO:0000314"/>
    <property type="project" value="UniProtKB"/>
</dbReference>
<dbReference type="GO" id="GO:0060271">
    <property type="term" value="P:cilium assembly"/>
    <property type="evidence" value="ECO:0007669"/>
    <property type="project" value="Ensembl"/>
</dbReference>
<dbReference type="GO" id="GO:0015031">
    <property type="term" value="P:protein transport"/>
    <property type="evidence" value="ECO:0007669"/>
    <property type="project" value="Ensembl"/>
</dbReference>
<dbReference type="InterPro" id="IPR006816">
    <property type="entry name" value="ELMO_dom"/>
</dbReference>
<dbReference type="InterPro" id="IPR050868">
    <property type="entry name" value="ELMO_domain-containing"/>
</dbReference>
<dbReference type="PANTHER" id="PTHR12771:SF18">
    <property type="entry name" value="ELMO DOMAIN-CONTAINING PROTEIN 1"/>
    <property type="match status" value="1"/>
</dbReference>
<dbReference type="PANTHER" id="PTHR12771">
    <property type="entry name" value="ENGULFMENT AND CELL MOTILITY"/>
    <property type="match status" value="1"/>
</dbReference>
<dbReference type="Pfam" id="PF04727">
    <property type="entry name" value="ELMO_CED12"/>
    <property type="match status" value="1"/>
</dbReference>
<dbReference type="PROSITE" id="PS51335">
    <property type="entry name" value="ELMO"/>
    <property type="match status" value="1"/>
</dbReference>
<accession>Q8N336</accession>
<accession>B4E167</accession>
<accession>G5E9S5</accession>
<accession>Q9NPW3</accession>
<evidence type="ECO:0000255" key="1">
    <source>
        <dbReference type="PROSITE-ProRule" id="PRU00664"/>
    </source>
</evidence>
<evidence type="ECO:0000269" key="2">
    <source>
    </source>
</evidence>
<evidence type="ECO:0000303" key="3">
    <source>
    </source>
</evidence>
<sequence>MKHFLRMLIQVCLYFYCKFLWRCLKFVMRKLTGRCELQRICYNTKPGASRTMKIETSLRDSKSKLLQTSVSVHPDAIEKTIEDIMELKKINPDVNPQLGISLQACLLQIVGYRNLIADVEKLRREAYDSDNPQHEEMLLKLWKFLKPNTPLESRISKQWCEIGFQGDDPKTDFRGMGLLGLYNLQYFAERDATAAQQVLSDSLHPKCRDITKEEISKFSKAEWEKKRMDKAIGYSFAIVGINITDLAYNLLVSGALKTHFYNIAPEAPTLSHFQQTFCYLMHEFHKFWIEEDPMDIMEFNRVREKFRKRIIKQLQNPDMALCPHFAASEGLINM</sequence>
<organism>
    <name type="scientific">Homo sapiens</name>
    <name type="common">Human</name>
    <dbReference type="NCBI Taxonomy" id="9606"/>
    <lineage>
        <taxon>Eukaryota</taxon>
        <taxon>Metazoa</taxon>
        <taxon>Chordata</taxon>
        <taxon>Craniata</taxon>
        <taxon>Vertebrata</taxon>
        <taxon>Euteleostomi</taxon>
        <taxon>Mammalia</taxon>
        <taxon>Eutheria</taxon>
        <taxon>Euarchontoglires</taxon>
        <taxon>Primates</taxon>
        <taxon>Haplorrhini</taxon>
        <taxon>Catarrhini</taxon>
        <taxon>Hominidae</taxon>
        <taxon>Homo</taxon>
    </lineage>
</organism>
<comment type="function">
    <text evidence="2">Acts as a GTPase-activating protein (GAP) toward guanine nucleotide exchange factors like ARL2, ARL3, ARF1 and ARF6, but not for GTPases outside the Arf family.</text>
</comment>
<comment type="alternative products">
    <event type="alternative splicing"/>
    <isoform>
        <id>Q8N336-1</id>
        <name>1</name>
        <sequence type="displayed"/>
    </isoform>
    <isoform>
        <id>Q8N336-2</id>
        <name>2</name>
        <sequence type="described" ref="VSP_044832 VSP_044833"/>
    </isoform>
    <isoform>
        <id>Q8N336-3</id>
        <name>3</name>
        <sequence type="described" ref="VSP_044833"/>
    </isoform>
</comment>
<gene>
    <name type="primary">ELMOD1</name>
</gene>
<name>ELMD1_HUMAN</name>
<reference key="1">
    <citation type="journal article" date="2004" name="Nat. Genet.">
        <title>Complete sequencing and characterization of 21,243 full-length human cDNAs.</title>
        <authorList>
            <person name="Ota T."/>
            <person name="Suzuki Y."/>
            <person name="Nishikawa T."/>
            <person name="Otsuki T."/>
            <person name="Sugiyama T."/>
            <person name="Irie R."/>
            <person name="Wakamatsu A."/>
            <person name="Hayashi K."/>
            <person name="Sato H."/>
            <person name="Nagai K."/>
            <person name="Kimura K."/>
            <person name="Makita H."/>
            <person name="Sekine M."/>
            <person name="Obayashi M."/>
            <person name="Nishi T."/>
            <person name="Shibahara T."/>
            <person name="Tanaka T."/>
            <person name="Ishii S."/>
            <person name="Yamamoto J."/>
            <person name="Saito K."/>
            <person name="Kawai Y."/>
            <person name="Isono Y."/>
            <person name="Nakamura Y."/>
            <person name="Nagahari K."/>
            <person name="Murakami K."/>
            <person name="Yasuda T."/>
            <person name="Iwayanagi T."/>
            <person name="Wagatsuma M."/>
            <person name="Shiratori A."/>
            <person name="Sudo H."/>
            <person name="Hosoiri T."/>
            <person name="Kaku Y."/>
            <person name="Kodaira H."/>
            <person name="Kondo H."/>
            <person name="Sugawara M."/>
            <person name="Takahashi M."/>
            <person name="Kanda K."/>
            <person name="Yokoi T."/>
            <person name="Furuya T."/>
            <person name="Kikkawa E."/>
            <person name="Omura Y."/>
            <person name="Abe K."/>
            <person name="Kamihara K."/>
            <person name="Katsuta N."/>
            <person name="Sato K."/>
            <person name="Tanikawa M."/>
            <person name="Yamazaki M."/>
            <person name="Ninomiya K."/>
            <person name="Ishibashi T."/>
            <person name="Yamashita H."/>
            <person name="Murakawa K."/>
            <person name="Fujimori K."/>
            <person name="Tanai H."/>
            <person name="Kimata M."/>
            <person name="Watanabe M."/>
            <person name="Hiraoka S."/>
            <person name="Chiba Y."/>
            <person name="Ishida S."/>
            <person name="Ono Y."/>
            <person name="Takiguchi S."/>
            <person name="Watanabe S."/>
            <person name="Yosida M."/>
            <person name="Hotuta T."/>
            <person name="Kusano J."/>
            <person name="Kanehori K."/>
            <person name="Takahashi-Fujii A."/>
            <person name="Hara H."/>
            <person name="Tanase T.-O."/>
            <person name="Nomura Y."/>
            <person name="Togiya S."/>
            <person name="Komai F."/>
            <person name="Hara R."/>
            <person name="Takeuchi K."/>
            <person name="Arita M."/>
            <person name="Imose N."/>
            <person name="Musashino K."/>
            <person name="Yuuki H."/>
            <person name="Oshima A."/>
            <person name="Sasaki N."/>
            <person name="Aotsuka S."/>
            <person name="Yoshikawa Y."/>
            <person name="Matsunawa H."/>
            <person name="Ichihara T."/>
            <person name="Shiohata N."/>
            <person name="Sano S."/>
            <person name="Moriya S."/>
            <person name="Momiyama H."/>
            <person name="Satoh N."/>
            <person name="Takami S."/>
            <person name="Terashima Y."/>
            <person name="Suzuki O."/>
            <person name="Nakagawa S."/>
            <person name="Senoh A."/>
            <person name="Mizoguchi H."/>
            <person name="Goto Y."/>
            <person name="Shimizu F."/>
            <person name="Wakebe H."/>
            <person name="Hishigaki H."/>
            <person name="Watanabe T."/>
            <person name="Sugiyama A."/>
            <person name="Takemoto M."/>
            <person name="Kawakami B."/>
            <person name="Yamazaki M."/>
            <person name="Watanabe K."/>
            <person name="Kumagai A."/>
            <person name="Itakura S."/>
            <person name="Fukuzumi Y."/>
            <person name="Fujimori Y."/>
            <person name="Komiyama M."/>
            <person name="Tashiro H."/>
            <person name="Tanigami A."/>
            <person name="Fujiwara T."/>
            <person name="Ono T."/>
            <person name="Yamada K."/>
            <person name="Fujii Y."/>
            <person name="Ozaki K."/>
            <person name="Hirao M."/>
            <person name="Ohmori Y."/>
            <person name="Kawabata A."/>
            <person name="Hikiji T."/>
            <person name="Kobatake N."/>
            <person name="Inagaki H."/>
            <person name="Ikema Y."/>
            <person name="Okamoto S."/>
            <person name="Okitani R."/>
            <person name="Kawakami T."/>
            <person name="Noguchi S."/>
            <person name="Itoh T."/>
            <person name="Shigeta K."/>
            <person name="Senba T."/>
            <person name="Matsumura K."/>
            <person name="Nakajima Y."/>
            <person name="Mizuno T."/>
            <person name="Morinaga M."/>
            <person name="Sasaki M."/>
            <person name="Togashi T."/>
            <person name="Oyama M."/>
            <person name="Hata H."/>
            <person name="Watanabe M."/>
            <person name="Komatsu T."/>
            <person name="Mizushima-Sugano J."/>
            <person name="Satoh T."/>
            <person name="Shirai Y."/>
            <person name="Takahashi Y."/>
            <person name="Nakagawa K."/>
            <person name="Okumura K."/>
            <person name="Nagase T."/>
            <person name="Nomura N."/>
            <person name="Kikuchi H."/>
            <person name="Masuho Y."/>
            <person name="Yamashita R."/>
            <person name="Nakai K."/>
            <person name="Yada T."/>
            <person name="Nakamura Y."/>
            <person name="Ohara O."/>
            <person name="Isogai T."/>
            <person name="Sugano S."/>
        </authorList>
    </citation>
    <scope>NUCLEOTIDE SEQUENCE [LARGE SCALE MRNA] (ISOFORM 2)</scope>
    <source>
        <tissue>Kidney</tissue>
    </source>
</reference>
<reference key="2">
    <citation type="journal article" date="2006" name="Nature">
        <title>Human chromosome 11 DNA sequence and analysis including novel gene identification.</title>
        <authorList>
            <person name="Taylor T.D."/>
            <person name="Noguchi H."/>
            <person name="Totoki Y."/>
            <person name="Toyoda A."/>
            <person name="Kuroki Y."/>
            <person name="Dewar K."/>
            <person name="Lloyd C."/>
            <person name="Itoh T."/>
            <person name="Takeda T."/>
            <person name="Kim D.-W."/>
            <person name="She X."/>
            <person name="Barlow K.F."/>
            <person name="Bloom T."/>
            <person name="Bruford E."/>
            <person name="Chang J.L."/>
            <person name="Cuomo C.A."/>
            <person name="Eichler E."/>
            <person name="FitzGerald M.G."/>
            <person name="Jaffe D.B."/>
            <person name="LaButti K."/>
            <person name="Nicol R."/>
            <person name="Park H.-S."/>
            <person name="Seaman C."/>
            <person name="Sougnez C."/>
            <person name="Yang X."/>
            <person name="Zimmer A.R."/>
            <person name="Zody M.C."/>
            <person name="Birren B.W."/>
            <person name="Nusbaum C."/>
            <person name="Fujiyama A."/>
            <person name="Hattori M."/>
            <person name="Rogers J."/>
            <person name="Lander E.S."/>
            <person name="Sakaki Y."/>
        </authorList>
    </citation>
    <scope>NUCLEOTIDE SEQUENCE [LARGE SCALE GENOMIC DNA]</scope>
</reference>
<reference key="3">
    <citation type="submission" date="2005-07" db="EMBL/GenBank/DDBJ databases">
        <authorList>
            <person name="Mural R.J."/>
            <person name="Istrail S."/>
            <person name="Sutton G."/>
            <person name="Florea L."/>
            <person name="Halpern A.L."/>
            <person name="Mobarry C.M."/>
            <person name="Lippert R."/>
            <person name="Walenz B."/>
            <person name="Shatkay H."/>
            <person name="Dew I."/>
            <person name="Miller J.R."/>
            <person name="Flanigan M.J."/>
            <person name="Edwards N.J."/>
            <person name="Bolanos R."/>
            <person name="Fasulo D."/>
            <person name="Halldorsson B.V."/>
            <person name="Hannenhalli S."/>
            <person name="Turner R."/>
            <person name="Yooseph S."/>
            <person name="Lu F."/>
            <person name="Nusskern D.R."/>
            <person name="Shue B.C."/>
            <person name="Zheng X.H."/>
            <person name="Zhong F."/>
            <person name="Delcher A.L."/>
            <person name="Huson D.H."/>
            <person name="Kravitz S.A."/>
            <person name="Mouchard L."/>
            <person name="Reinert K."/>
            <person name="Remington K.A."/>
            <person name="Clark A.G."/>
            <person name="Waterman M.S."/>
            <person name="Eichler E.E."/>
            <person name="Adams M.D."/>
            <person name="Hunkapiller M.W."/>
            <person name="Myers E.W."/>
            <person name="Venter J.C."/>
        </authorList>
    </citation>
    <scope>NUCLEOTIDE SEQUENCE [LARGE SCALE GENOMIC DNA]</scope>
</reference>
<reference key="4">
    <citation type="journal article" date="2004" name="Genome Res.">
        <title>The status, quality, and expansion of the NIH full-length cDNA project: the Mammalian Gene Collection (MGC).</title>
        <authorList>
            <consortium name="The MGC Project Team"/>
        </authorList>
    </citation>
    <scope>NUCLEOTIDE SEQUENCE [LARGE SCALE MRNA] (ISOFORM 1)</scope>
    <source>
        <tissue>Hippocampus</tissue>
    </source>
</reference>
<reference key="5">
    <citation type="journal article" date="2007" name="BMC Genomics">
        <title>The full-ORF clone resource of the German cDNA consortium.</title>
        <authorList>
            <person name="Bechtel S."/>
            <person name="Rosenfelder H."/>
            <person name="Duda A."/>
            <person name="Schmidt C.P."/>
            <person name="Ernst U."/>
            <person name="Wellenreuther R."/>
            <person name="Mehrle A."/>
            <person name="Schuster C."/>
            <person name="Bahr A."/>
            <person name="Bloecker H."/>
            <person name="Heubner D."/>
            <person name="Hoerlein A."/>
            <person name="Michel G."/>
            <person name="Wedler H."/>
            <person name="Koehrer K."/>
            <person name="Ottenwaelder B."/>
            <person name="Poustka A."/>
            <person name="Wiemann S."/>
            <person name="Schupp I."/>
        </authorList>
    </citation>
    <scope>NUCLEOTIDE SEQUENCE [LARGE SCALE MRNA] OF 138-334 (ISOFORM 1)</scope>
    <source>
        <tissue>Brain</tissue>
    </source>
</reference>
<reference key="6">
    <citation type="journal article" date="2007" name="J. Biol. Chem.">
        <title>ELMOD2 is an Arl2 GTPase-activating protein that also acts on Arfs.</title>
        <authorList>
            <person name="Bowzard J.B."/>
            <person name="Cheng D."/>
            <person name="Peng J."/>
            <person name="Kahn R.A."/>
        </authorList>
    </citation>
    <scope>FUNCTION</scope>
</reference>
<protein>
    <recommendedName>
        <fullName>ELMO domain-containing protein 1</fullName>
    </recommendedName>
</protein>
<proteinExistence type="evidence at protein level"/>
<feature type="chain" id="PRO_0000225014" description="ELMO domain-containing protein 1">
    <location>
        <begin position="1"/>
        <end position="334"/>
    </location>
</feature>
<feature type="domain" description="ELMO" evidence="1">
    <location>
        <begin position="133"/>
        <end position="314"/>
    </location>
</feature>
<feature type="splice variant" id="VSP_044832" description="In isoform 2." evidence="3">
    <location>
        <begin position="1"/>
        <end position="136"/>
    </location>
</feature>
<feature type="splice variant" id="VSP_044833" description="In isoform 2 and isoform 3." evidence="3">
    <location>
        <begin position="208"/>
        <end position="215"/>
    </location>
</feature>